<evidence type="ECO:0000255" key="1">
    <source>
        <dbReference type="HAMAP-Rule" id="MF_00248"/>
    </source>
</evidence>
<reference key="1">
    <citation type="submission" date="2007-05" db="EMBL/GenBank/DDBJ databases">
        <title>Complete sequence of Thermosipho melanesiensis BI429.</title>
        <authorList>
            <consortium name="US DOE Joint Genome Institute"/>
            <person name="Copeland A."/>
            <person name="Lucas S."/>
            <person name="Lapidus A."/>
            <person name="Barry K."/>
            <person name="Glavina del Rio T."/>
            <person name="Dalin E."/>
            <person name="Tice H."/>
            <person name="Pitluck S."/>
            <person name="Chertkov O."/>
            <person name="Brettin T."/>
            <person name="Bruce D."/>
            <person name="Detter J.C."/>
            <person name="Han C."/>
            <person name="Schmutz J."/>
            <person name="Larimer F."/>
            <person name="Land M."/>
            <person name="Hauser L."/>
            <person name="Kyrpides N."/>
            <person name="Mikhailova N."/>
            <person name="Nelson K."/>
            <person name="Gogarten J.P."/>
            <person name="Noll K."/>
            <person name="Richardson P."/>
        </authorList>
    </citation>
    <scope>NUCLEOTIDE SEQUENCE [LARGE SCALE GENOMIC DNA]</scope>
    <source>
        <strain>DSM 12029 / CIP 104789 / BI429</strain>
    </source>
</reference>
<comment type="function">
    <text evidence="1">Protease subunit of a proteasome-like degradation complex believed to be a general protein degrading machinery.</text>
</comment>
<comment type="catalytic activity">
    <reaction evidence="1">
        <text>ATP-dependent cleavage of peptide bonds with broad specificity.</text>
        <dbReference type="EC" id="3.4.25.2"/>
    </reaction>
</comment>
<comment type="activity regulation">
    <text evidence="1">Allosterically activated by HslU binding.</text>
</comment>
<comment type="subunit">
    <text evidence="1">A double ring-shaped homohexamer of HslV is capped on each side by a ring-shaped HslU homohexamer. The assembly of the HslU/HslV complex is dependent on binding of ATP.</text>
</comment>
<comment type="subcellular location">
    <subcellularLocation>
        <location evidence="1">Cytoplasm</location>
    </subcellularLocation>
</comment>
<comment type="similarity">
    <text evidence="1">Belongs to the peptidase T1B family. HslV subfamily.</text>
</comment>
<gene>
    <name evidence="1" type="primary">hslV</name>
    <name type="ordered locus">Tmel_0230</name>
</gene>
<dbReference type="EC" id="3.4.25.2" evidence="1"/>
<dbReference type="EMBL" id="CP000716">
    <property type="protein sequence ID" value="ABR30104.1"/>
    <property type="molecule type" value="Genomic_DNA"/>
</dbReference>
<dbReference type="RefSeq" id="WP_012056465.1">
    <property type="nucleotide sequence ID" value="NC_009616.1"/>
</dbReference>
<dbReference type="SMR" id="A6LJK3"/>
<dbReference type="STRING" id="391009.Tmel_0230"/>
<dbReference type="MEROPS" id="T01.006"/>
<dbReference type="KEGG" id="tme:Tmel_0230"/>
<dbReference type="eggNOG" id="COG5405">
    <property type="taxonomic scope" value="Bacteria"/>
</dbReference>
<dbReference type="HOGENOM" id="CLU_093872_1_0_0"/>
<dbReference type="OrthoDB" id="9804884at2"/>
<dbReference type="Proteomes" id="UP000001110">
    <property type="component" value="Chromosome"/>
</dbReference>
<dbReference type="GO" id="GO:0009376">
    <property type="term" value="C:HslUV protease complex"/>
    <property type="evidence" value="ECO:0007669"/>
    <property type="project" value="UniProtKB-UniRule"/>
</dbReference>
<dbReference type="GO" id="GO:0005839">
    <property type="term" value="C:proteasome core complex"/>
    <property type="evidence" value="ECO:0007669"/>
    <property type="project" value="InterPro"/>
</dbReference>
<dbReference type="GO" id="GO:0046872">
    <property type="term" value="F:metal ion binding"/>
    <property type="evidence" value="ECO:0007669"/>
    <property type="project" value="UniProtKB-KW"/>
</dbReference>
<dbReference type="GO" id="GO:0004298">
    <property type="term" value="F:threonine-type endopeptidase activity"/>
    <property type="evidence" value="ECO:0007669"/>
    <property type="project" value="UniProtKB-KW"/>
</dbReference>
<dbReference type="GO" id="GO:0051603">
    <property type="term" value="P:proteolysis involved in protein catabolic process"/>
    <property type="evidence" value="ECO:0007669"/>
    <property type="project" value="InterPro"/>
</dbReference>
<dbReference type="CDD" id="cd01913">
    <property type="entry name" value="protease_HslV"/>
    <property type="match status" value="1"/>
</dbReference>
<dbReference type="Gene3D" id="3.60.20.10">
    <property type="entry name" value="Glutamine Phosphoribosylpyrophosphate, subunit 1, domain 1"/>
    <property type="match status" value="1"/>
</dbReference>
<dbReference type="HAMAP" id="MF_00248">
    <property type="entry name" value="HslV"/>
    <property type="match status" value="1"/>
</dbReference>
<dbReference type="InterPro" id="IPR022281">
    <property type="entry name" value="ATP-dep_Prtase_HsIV_su"/>
</dbReference>
<dbReference type="InterPro" id="IPR029055">
    <property type="entry name" value="Ntn_hydrolases_N"/>
</dbReference>
<dbReference type="InterPro" id="IPR001353">
    <property type="entry name" value="Proteasome_sua/b"/>
</dbReference>
<dbReference type="InterPro" id="IPR023333">
    <property type="entry name" value="Proteasome_suB-type"/>
</dbReference>
<dbReference type="NCBIfam" id="TIGR03692">
    <property type="entry name" value="ATP_dep_HslV"/>
    <property type="match status" value="1"/>
</dbReference>
<dbReference type="NCBIfam" id="NF003964">
    <property type="entry name" value="PRK05456.1"/>
    <property type="match status" value="1"/>
</dbReference>
<dbReference type="PANTHER" id="PTHR32194:SF0">
    <property type="entry name" value="ATP-DEPENDENT PROTEASE SUBUNIT HSLV"/>
    <property type="match status" value="1"/>
</dbReference>
<dbReference type="PANTHER" id="PTHR32194">
    <property type="entry name" value="METALLOPROTEASE TLDD"/>
    <property type="match status" value="1"/>
</dbReference>
<dbReference type="Pfam" id="PF00227">
    <property type="entry name" value="Proteasome"/>
    <property type="match status" value="1"/>
</dbReference>
<dbReference type="PIRSF" id="PIRSF039093">
    <property type="entry name" value="HslV"/>
    <property type="match status" value="1"/>
</dbReference>
<dbReference type="SUPFAM" id="SSF56235">
    <property type="entry name" value="N-terminal nucleophile aminohydrolases (Ntn hydrolases)"/>
    <property type="match status" value="1"/>
</dbReference>
<dbReference type="PROSITE" id="PS51476">
    <property type="entry name" value="PROTEASOME_BETA_2"/>
    <property type="match status" value="1"/>
</dbReference>
<feature type="chain" id="PRO_0000336800" description="ATP-dependent protease subunit HslV">
    <location>
        <begin position="1"/>
        <end position="176"/>
    </location>
</feature>
<feature type="active site" evidence="1">
    <location>
        <position position="6"/>
    </location>
</feature>
<feature type="binding site" evidence="1">
    <location>
        <position position="161"/>
    </location>
    <ligand>
        <name>Na(+)</name>
        <dbReference type="ChEBI" id="CHEBI:29101"/>
    </ligand>
</feature>
<feature type="binding site" evidence="1">
    <location>
        <position position="164"/>
    </location>
    <ligand>
        <name>Na(+)</name>
        <dbReference type="ChEBI" id="CHEBI:29101"/>
    </ligand>
</feature>
<feature type="binding site" evidence="1">
    <location>
        <position position="167"/>
    </location>
    <ligand>
        <name>Na(+)</name>
        <dbReference type="ChEBI" id="CHEBI:29101"/>
    </ligand>
</feature>
<proteinExistence type="inferred from homology"/>
<sequence length="176" mass="19337">MKWRSTTVVCVRKNDSVVMVSDGQVTYGNTIMKGNAKKVRKMGEGNVLAGFAGSVADAMALFDRFEAKYREWGGNLLKSAVELAKDWRTDRVLRRLEALLLVADKKYTFIISGTGEVIQPEDDIASIGSGSPYAIAAGRALLKHTNLSAKEIALESIRIASEICIYTNDNFTIEEL</sequence>
<name>HSLV_THEM4</name>
<organism>
    <name type="scientific">Thermosipho melanesiensis (strain DSM 12029 / CIP 104789 / BI429)</name>
    <dbReference type="NCBI Taxonomy" id="391009"/>
    <lineage>
        <taxon>Bacteria</taxon>
        <taxon>Thermotogati</taxon>
        <taxon>Thermotogota</taxon>
        <taxon>Thermotogae</taxon>
        <taxon>Thermotogales</taxon>
        <taxon>Fervidobacteriaceae</taxon>
        <taxon>Thermosipho</taxon>
    </lineage>
</organism>
<protein>
    <recommendedName>
        <fullName evidence="1">ATP-dependent protease subunit HslV</fullName>
        <ecNumber evidence="1">3.4.25.2</ecNumber>
    </recommendedName>
</protein>
<keyword id="KW-0021">Allosteric enzyme</keyword>
<keyword id="KW-0963">Cytoplasm</keyword>
<keyword id="KW-0378">Hydrolase</keyword>
<keyword id="KW-0479">Metal-binding</keyword>
<keyword id="KW-0645">Protease</keyword>
<keyword id="KW-0915">Sodium</keyword>
<keyword id="KW-0888">Threonine protease</keyword>
<accession>A6LJK3</accession>